<dbReference type="SMR" id="P85206"/>
<dbReference type="Allergome" id="5737">
    <property type="allergen name" value="Act d 10"/>
</dbReference>
<dbReference type="Allergome" id="5739">
    <property type="allergen name" value="Act d 10.0201"/>
</dbReference>
<dbReference type="GO" id="GO:0008289">
    <property type="term" value="F:lipid binding"/>
    <property type="evidence" value="ECO:0007669"/>
    <property type="project" value="UniProtKB-KW"/>
</dbReference>
<dbReference type="GO" id="GO:0006869">
    <property type="term" value="P:lipid transport"/>
    <property type="evidence" value="ECO:0007669"/>
    <property type="project" value="InterPro"/>
</dbReference>
<dbReference type="CDD" id="cd01960">
    <property type="entry name" value="nsLTP1"/>
    <property type="match status" value="1"/>
</dbReference>
<dbReference type="Gene3D" id="1.10.110.10">
    <property type="entry name" value="Plant lipid-transfer and hydrophobic proteins"/>
    <property type="match status" value="1"/>
</dbReference>
<dbReference type="InterPro" id="IPR036312">
    <property type="entry name" value="Bifun_inhib/LTP/seed_sf"/>
</dbReference>
<dbReference type="InterPro" id="IPR016140">
    <property type="entry name" value="Bifunc_inhib/LTP/seed_store"/>
</dbReference>
<dbReference type="InterPro" id="IPR000528">
    <property type="entry name" value="Plant_nsLTP"/>
</dbReference>
<dbReference type="PANTHER" id="PTHR33076">
    <property type="entry name" value="NON-SPECIFIC LIPID-TRANSFER PROTEIN 2-RELATED"/>
    <property type="match status" value="1"/>
</dbReference>
<dbReference type="Pfam" id="PF00234">
    <property type="entry name" value="Tryp_alpha_amyl"/>
    <property type="match status" value="1"/>
</dbReference>
<dbReference type="PRINTS" id="PR00382">
    <property type="entry name" value="LIPIDTRNSFER"/>
</dbReference>
<dbReference type="SMART" id="SM00499">
    <property type="entry name" value="AAI"/>
    <property type="match status" value="1"/>
</dbReference>
<dbReference type="SUPFAM" id="SSF47699">
    <property type="entry name" value="Bifunctional inhibitor/lipid-transfer protein/seed storage 2S albumin"/>
    <property type="match status" value="1"/>
</dbReference>
<evidence type="ECO:0000250" key="1">
    <source>
        <dbReference type="UniProtKB" id="Q42952"/>
    </source>
</evidence>
<evidence type="ECO:0000255" key="2"/>
<evidence type="ECO:0000269" key="3">
    <source>
    </source>
</evidence>
<evidence type="ECO:0000303" key="4">
    <source>
    </source>
</evidence>
<evidence type="ECO:0000305" key="5"/>
<feature type="chain" id="PRO_0000415603" description="Non-specific lipid-transfer protein 2">
    <location>
        <begin position="1"/>
        <end position="92"/>
    </location>
</feature>
<feature type="disulfide bond" evidence="1">
    <location>
        <begin position="4"/>
        <end position="52"/>
    </location>
</feature>
<feature type="disulfide bond" evidence="1">
    <location>
        <begin position="14"/>
        <end position="28"/>
    </location>
</feature>
<feature type="disulfide bond" evidence="1">
    <location>
        <begin position="29"/>
        <end position="74"/>
    </location>
</feature>
<feature type="disulfide bond" evidence="1">
    <location>
        <begin position="50"/>
        <end position="88"/>
    </location>
</feature>
<organism>
    <name type="scientific">Actinidia deliciosa</name>
    <name type="common">Kiwi</name>
    <dbReference type="NCBI Taxonomy" id="3627"/>
    <lineage>
        <taxon>Eukaryota</taxon>
        <taxon>Viridiplantae</taxon>
        <taxon>Streptophyta</taxon>
        <taxon>Embryophyta</taxon>
        <taxon>Tracheophyta</taxon>
        <taxon>Spermatophyta</taxon>
        <taxon>Magnoliopsida</taxon>
        <taxon>eudicotyledons</taxon>
        <taxon>Gunneridae</taxon>
        <taxon>Pentapetalae</taxon>
        <taxon>asterids</taxon>
        <taxon>Ericales</taxon>
        <taxon>Actinidiaceae</taxon>
        <taxon>Actinidia</taxon>
    </lineage>
</organism>
<keyword id="KW-0020">Allergen</keyword>
<keyword id="KW-0903">Direct protein sequencing</keyword>
<keyword id="KW-1015">Disulfide bond</keyword>
<keyword id="KW-0446">Lipid-binding</keyword>
<keyword id="KW-0813">Transport</keyword>
<sequence length="92" mass="9488">TVSCGQVDTALTPCLTYLTKGGTPSTQCCSGVRSLKSMTGTKVPDRQAACNCLKQAAARYQGIKDAAAALSQKCGVQLSVPISRSTDCSKIS</sequence>
<reference evidence="5" key="1">
    <citation type="journal article" date="2011" name="PLoS ONE">
        <title>Allergenic lipid transfer proteins from plant-derived foods do not immunologically and clinically behave homogeneously: the kiwifruit LTP as a model.</title>
        <authorList>
            <person name="Bernardi M.L."/>
            <person name="Giangrieco I."/>
            <person name="Camardella L."/>
            <person name="Ferrara R."/>
            <person name="Palazzo P."/>
            <person name="Panico M.R."/>
            <person name="Crescenzo R."/>
            <person name="Carratore V."/>
            <person name="Zennaro D."/>
            <person name="Liso M."/>
            <person name="Santoro M."/>
            <person name="Zuzzi S."/>
            <person name="Tamburrini M."/>
            <person name="Ciardiello M.A."/>
            <person name="Mari A."/>
        </authorList>
    </citation>
    <scope>PROTEIN SEQUENCE</scope>
    <scope>TISSUE SPECIFICITY</scope>
    <scope>MASS SPECTROMETRY</scope>
    <scope>ALLERGENICITY</scope>
    <source>
        <tissue evidence="3">Seed</tissue>
    </source>
</reference>
<accession>P85206</accession>
<comment type="function">
    <text evidence="1">Plant non-specific lipid-transfer proteins transfer phospholipids as well as galactolipids across membranes. May play a role in wax or cutin deposition in the cell walls of expanding epidermal cells and certain secretory tissues (By similarity).</text>
</comment>
<comment type="tissue specificity">
    <text evidence="3">Expressed in seeds and, at very low levels, in pulp of fruit (at protein level).</text>
</comment>
<comment type="mass spectrometry" mass="9484.0" error="20.0" method="MALDI" evidence="3"/>
<comment type="allergen">
    <text evidence="3">Causes an allergic reaction in human. Binds to IgE.</text>
</comment>
<comment type="similarity">
    <text evidence="2">Belongs to the plant LTP family.</text>
</comment>
<protein>
    <recommendedName>
        <fullName evidence="4">Non-specific lipid-transfer protein 2</fullName>
        <shortName evidence="4">LTP2</shortName>
    </recommendedName>
    <allergenName evidence="4">Act d 10.02</allergenName>
</protein>
<proteinExistence type="evidence at protein level"/>
<name>NLTP2_ACTDE</name>